<name>CUL5_DICDI</name>
<feature type="chain" id="PRO_0000345013" description="Cullin-5">
    <location>
        <begin position="1"/>
        <end position="750"/>
    </location>
</feature>
<feature type="domain" description="Cullin neddylation" evidence="4">
    <location>
        <begin position="678"/>
        <end position="739"/>
    </location>
</feature>
<feature type="cross-link" description="Glycyl lysine isopeptide (Lys-Gly) (interchain with G-Cter in NEDD8)" evidence="2">
    <location>
        <position position="691"/>
    </location>
</feature>
<dbReference type="EMBL" id="AAFI02000026">
    <property type="protein sequence ID" value="EAL67917.1"/>
    <property type="molecule type" value="Genomic_DNA"/>
</dbReference>
<dbReference type="RefSeq" id="XP_641893.1">
    <property type="nucleotide sequence ID" value="XM_636801.1"/>
</dbReference>
<dbReference type="SMR" id="Q54XF7"/>
<dbReference type="FunCoup" id="Q54XF7">
    <property type="interactions" value="139"/>
</dbReference>
<dbReference type="STRING" id="44689.Q54XF7"/>
<dbReference type="PaxDb" id="44689-DDB0266744"/>
<dbReference type="EnsemblProtists" id="EAL67917">
    <property type="protein sequence ID" value="EAL67917"/>
    <property type="gene ID" value="DDB_G0278991"/>
</dbReference>
<dbReference type="GeneID" id="8621819"/>
<dbReference type="KEGG" id="ddi:DDB_G0278991"/>
<dbReference type="dictyBase" id="DDB_G0278991">
    <property type="gene designation" value="culE"/>
</dbReference>
<dbReference type="VEuPathDB" id="AmoebaDB:DDB_G0278991"/>
<dbReference type="eggNOG" id="KOG2166">
    <property type="taxonomic scope" value="Eukaryota"/>
</dbReference>
<dbReference type="HOGENOM" id="CLU_004747_6_1_1"/>
<dbReference type="InParanoid" id="Q54XF7"/>
<dbReference type="OMA" id="ESRICYS"/>
<dbReference type="PhylomeDB" id="Q54XF7"/>
<dbReference type="Reactome" id="R-DDI-8951664">
    <property type="pathway name" value="Neddylation"/>
</dbReference>
<dbReference type="Reactome" id="R-DDI-983168">
    <property type="pathway name" value="Antigen processing: Ubiquitination &amp; Proteasome degradation"/>
</dbReference>
<dbReference type="UniPathway" id="UPA00143"/>
<dbReference type="PRO" id="PR:Q54XF7"/>
<dbReference type="Proteomes" id="UP000002195">
    <property type="component" value="Chromosome 3"/>
</dbReference>
<dbReference type="GO" id="GO:0031461">
    <property type="term" value="C:cullin-RING ubiquitin ligase complex"/>
    <property type="evidence" value="ECO:0000318"/>
    <property type="project" value="GO_Central"/>
</dbReference>
<dbReference type="GO" id="GO:0043223">
    <property type="term" value="C:cytoplasmic SCF ubiquitin ligase complex"/>
    <property type="evidence" value="ECO:0000314"/>
    <property type="project" value="dictyBase"/>
</dbReference>
<dbReference type="GO" id="GO:0031625">
    <property type="term" value="F:ubiquitin protein ligase binding"/>
    <property type="evidence" value="ECO:0000318"/>
    <property type="project" value="GO_Central"/>
</dbReference>
<dbReference type="GO" id="GO:0016567">
    <property type="term" value="P:protein ubiquitination"/>
    <property type="evidence" value="ECO:0000318"/>
    <property type="project" value="GO_Central"/>
</dbReference>
<dbReference type="GO" id="GO:0006511">
    <property type="term" value="P:ubiquitin-dependent protein catabolic process"/>
    <property type="evidence" value="ECO:0007669"/>
    <property type="project" value="InterPro"/>
</dbReference>
<dbReference type="FunFam" id="1.10.10.10:FF:000014">
    <property type="entry name" value="Cullin 1"/>
    <property type="match status" value="1"/>
</dbReference>
<dbReference type="FunFam" id="1.20.1310.10:FF:000014">
    <property type="entry name" value="Cullin 5"/>
    <property type="match status" value="1"/>
</dbReference>
<dbReference type="FunFam" id="1.20.1310.10:FF:000002">
    <property type="entry name" value="cullin-3 isoform X1"/>
    <property type="match status" value="1"/>
</dbReference>
<dbReference type="Gene3D" id="1.20.1310.10">
    <property type="entry name" value="Cullin Repeats"/>
    <property type="match status" value="4"/>
</dbReference>
<dbReference type="Gene3D" id="3.30.230.130">
    <property type="entry name" value="Cullin, Chain C, Domain 2"/>
    <property type="match status" value="1"/>
</dbReference>
<dbReference type="Gene3D" id="1.10.10.10">
    <property type="entry name" value="Winged helix-like DNA-binding domain superfamily/Winged helix DNA-binding domain"/>
    <property type="match status" value="1"/>
</dbReference>
<dbReference type="InterPro" id="IPR045093">
    <property type="entry name" value="Cullin"/>
</dbReference>
<dbReference type="InterPro" id="IPR016158">
    <property type="entry name" value="Cullin_homology"/>
</dbReference>
<dbReference type="InterPro" id="IPR036317">
    <property type="entry name" value="Cullin_homology_sf"/>
</dbReference>
<dbReference type="InterPro" id="IPR001373">
    <property type="entry name" value="Cullin_N"/>
</dbReference>
<dbReference type="InterPro" id="IPR019559">
    <property type="entry name" value="Cullin_neddylation_domain"/>
</dbReference>
<dbReference type="InterPro" id="IPR016159">
    <property type="entry name" value="Cullin_repeat-like_dom_sf"/>
</dbReference>
<dbReference type="InterPro" id="IPR036388">
    <property type="entry name" value="WH-like_DNA-bd_sf"/>
</dbReference>
<dbReference type="InterPro" id="IPR036390">
    <property type="entry name" value="WH_DNA-bd_sf"/>
</dbReference>
<dbReference type="PANTHER" id="PTHR11932">
    <property type="entry name" value="CULLIN"/>
    <property type="match status" value="1"/>
</dbReference>
<dbReference type="Pfam" id="PF00888">
    <property type="entry name" value="Cullin"/>
    <property type="match status" value="1"/>
</dbReference>
<dbReference type="Pfam" id="PF10557">
    <property type="entry name" value="Cullin_Nedd8"/>
    <property type="match status" value="1"/>
</dbReference>
<dbReference type="SMART" id="SM00182">
    <property type="entry name" value="CULLIN"/>
    <property type="match status" value="1"/>
</dbReference>
<dbReference type="SMART" id="SM00884">
    <property type="entry name" value="Cullin_Nedd8"/>
    <property type="match status" value="1"/>
</dbReference>
<dbReference type="SUPFAM" id="SSF75632">
    <property type="entry name" value="Cullin homology domain"/>
    <property type="match status" value="1"/>
</dbReference>
<dbReference type="SUPFAM" id="SSF74788">
    <property type="entry name" value="Cullin repeat-like"/>
    <property type="match status" value="1"/>
</dbReference>
<dbReference type="SUPFAM" id="SSF46785">
    <property type="entry name" value="Winged helix' DNA-binding domain"/>
    <property type="match status" value="1"/>
</dbReference>
<dbReference type="PROSITE" id="PS50069">
    <property type="entry name" value="CULLIN_2"/>
    <property type="match status" value="1"/>
</dbReference>
<sequence>MSDQITVDELWAECEQTFEDLFLNLKKGLSRKRYMEIYTKIYNYCSSANEKALIDFYIPKVKVLVAQKAVEIMSRSESYPNDALLLFFRNQWNEWKMSSNVLKNLLSPVNKIHSSDKKTTSSSANQNESVVYSDTLNSWRETAFNPLKNKLSVSLLQIIKNDRTGFSTNLQVLSDSLECYVQLGPEKNKLEIYQSCFEQQFLQETETFYKAESADFIEKNGVCEYMRHVYNRIEQETNRVNQYMPISTLEKLTKILNNVLISNYKEQFASKFLDILIEDKSSDLVMMYSLLSRVNHLTPLKNIFSDFIKSEGLKEIESNLKEAQEKPQVLISILLKIYSRFNIMIKECYGNDTDFTTAMDKSFSILVNENPASYDPKKKESNIPVVLSKFCDQILRKGPHHISDEAELEKKLTEAVCLFKYLPDKDIFMLNYQKMLSKRLVEDLSASEDAETLMINKLKNYQGFDYCTKLTRMITDMRLCKDININFQNHLNEKSLTLPYQFNFYVLTNGSWTLTNKQTATPFKPPSEMLSSITYFESFYKKSYQGRVLTFLYDFSRADVDSRQAKGKIYKLTTTAYQMAILLMFNGADKITRFLINDTIGLDETSIRLPLLALIKTGIIECSEPSFKNWNNDTEFTVNSKFSSKKMKVSCNIAVQIGETKQSEGQQTVSEQEIEKERFFKLQAAIVRIMKSKKTMTHNDLTVETTTQVSKWFTPKITAIKKAIEYLIDQEYIRRTTDDNPSARKYEYMA</sequence>
<evidence type="ECO:0000250" key="1"/>
<evidence type="ECO:0000250" key="2">
    <source>
        <dbReference type="UniProtKB" id="Q13616"/>
    </source>
</evidence>
<evidence type="ECO:0000250" key="3">
    <source>
        <dbReference type="UniProtKB" id="Q93034"/>
    </source>
</evidence>
<evidence type="ECO:0000255" key="4"/>
<evidence type="ECO:0000255" key="5">
    <source>
        <dbReference type="PROSITE-ProRule" id="PRU00330"/>
    </source>
</evidence>
<protein>
    <recommendedName>
        <fullName>Cullin-5</fullName>
        <shortName>CUL-5</shortName>
    </recommendedName>
    <alternativeName>
        <fullName>Cullin-E</fullName>
    </alternativeName>
</protein>
<gene>
    <name type="primary">culE</name>
    <name type="synonym">cul5</name>
    <name type="ORF">DDB_G0278991</name>
</gene>
<reference key="1">
    <citation type="journal article" date="2005" name="Nature">
        <title>The genome of the social amoeba Dictyostelium discoideum.</title>
        <authorList>
            <person name="Eichinger L."/>
            <person name="Pachebat J.A."/>
            <person name="Gloeckner G."/>
            <person name="Rajandream M.A."/>
            <person name="Sucgang R."/>
            <person name="Berriman M."/>
            <person name="Song J."/>
            <person name="Olsen R."/>
            <person name="Szafranski K."/>
            <person name="Xu Q."/>
            <person name="Tunggal B."/>
            <person name="Kummerfeld S."/>
            <person name="Madera M."/>
            <person name="Konfortov B.A."/>
            <person name="Rivero F."/>
            <person name="Bankier A.T."/>
            <person name="Lehmann R."/>
            <person name="Hamlin N."/>
            <person name="Davies R."/>
            <person name="Gaudet P."/>
            <person name="Fey P."/>
            <person name="Pilcher K."/>
            <person name="Chen G."/>
            <person name="Saunders D."/>
            <person name="Sodergren E.J."/>
            <person name="Davis P."/>
            <person name="Kerhornou A."/>
            <person name="Nie X."/>
            <person name="Hall N."/>
            <person name="Anjard C."/>
            <person name="Hemphill L."/>
            <person name="Bason N."/>
            <person name="Farbrother P."/>
            <person name="Desany B."/>
            <person name="Just E."/>
            <person name="Morio T."/>
            <person name="Rost R."/>
            <person name="Churcher C.M."/>
            <person name="Cooper J."/>
            <person name="Haydock S."/>
            <person name="van Driessche N."/>
            <person name="Cronin A."/>
            <person name="Goodhead I."/>
            <person name="Muzny D.M."/>
            <person name="Mourier T."/>
            <person name="Pain A."/>
            <person name="Lu M."/>
            <person name="Harper D."/>
            <person name="Lindsay R."/>
            <person name="Hauser H."/>
            <person name="James K.D."/>
            <person name="Quiles M."/>
            <person name="Madan Babu M."/>
            <person name="Saito T."/>
            <person name="Buchrieser C."/>
            <person name="Wardroper A."/>
            <person name="Felder M."/>
            <person name="Thangavelu M."/>
            <person name="Johnson D."/>
            <person name="Knights A."/>
            <person name="Loulseged H."/>
            <person name="Mungall K.L."/>
            <person name="Oliver K."/>
            <person name="Price C."/>
            <person name="Quail M.A."/>
            <person name="Urushihara H."/>
            <person name="Hernandez J."/>
            <person name="Rabbinowitsch E."/>
            <person name="Steffen D."/>
            <person name="Sanders M."/>
            <person name="Ma J."/>
            <person name="Kohara Y."/>
            <person name="Sharp S."/>
            <person name="Simmonds M.N."/>
            <person name="Spiegler S."/>
            <person name="Tivey A."/>
            <person name="Sugano S."/>
            <person name="White B."/>
            <person name="Walker D."/>
            <person name="Woodward J.R."/>
            <person name="Winckler T."/>
            <person name="Tanaka Y."/>
            <person name="Shaulsky G."/>
            <person name="Schleicher M."/>
            <person name="Weinstock G.M."/>
            <person name="Rosenthal A."/>
            <person name="Cox E.C."/>
            <person name="Chisholm R.L."/>
            <person name="Gibbs R.A."/>
            <person name="Loomis W.F."/>
            <person name="Platzer M."/>
            <person name="Kay R.R."/>
            <person name="Williams J.G."/>
            <person name="Dear P.H."/>
            <person name="Noegel A.A."/>
            <person name="Barrell B.G."/>
            <person name="Kuspa A."/>
        </authorList>
    </citation>
    <scope>NUCLEOTIDE SEQUENCE [LARGE SCALE GENOMIC DNA]</scope>
    <source>
        <strain>AX4</strain>
    </source>
</reference>
<organism>
    <name type="scientific">Dictyostelium discoideum</name>
    <name type="common">Social amoeba</name>
    <dbReference type="NCBI Taxonomy" id="44689"/>
    <lineage>
        <taxon>Eukaryota</taxon>
        <taxon>Amoebozoa</taxon>
        <taxon>Evosea</taxon>
        <taxon>Eumycetozoa</taxon>
        <taxon>Dictyostelia</taxon>
        <taxon>Dictyosteliales</taxon>
        <taxon>Dictyosteliaceae</taxon>
        <taxon>Dictyostelium</taxon>
    </lineage>
</organism>
<keyword id="KW-1017">Isopeptide bond</keyword>
<keyword id="KW-1185">Reference proteome</keyword>
<keyword id="KW-0832">Ubl conjugation</keyword>
<keyword id="KW-0833">Ubl conjugation pathway</keyword>
<comment type="function">
    <text evidence="1">Probable core component of cullin-based SCF-like E3 ubiquitin-protein ligase complexes which mediate the ubiquitination and subsequent proteasomal degradation of target proteins. The E3 ubiquitin-protein ligase activity of the complex is dependent on the neddylation of the cullin subunit (By similarity).</text>
</comment>
<comment type="pathway">
    <text>Protein modification; protein ubiquitination.</text>
</comment>
<comment type="PTM">
    <text evidence="3">Neddylated; which enhances the ubiquitination activity of SCF-like complex.</text>
</comment>
<comment type="similarity">
    <text evidence="5">Belongs to the cullin family.</text>
</comment>
<proteinExistence type="inferred from homology"/>
<accession>Q54XF7</accession>